<protein>
    <recommendedName>
        <fullName evidence="1">UPF0235 protein PFL_5841</fullName>
    </recommendedName>
</protein>
<evidence type="ECO:0000255" key="1">
    <source>
        <dbReference type="HAMAP-Rule" id="MF_00634"/>
    </source>
</evidence>
<proteinExistence type="inferred from homology"/>
<gene>
    <name type="ordered locus">PFL_5841</name>
</gene>
<reference key="1">
    <citation type="journal article" date="2005" name="Nat. Biotechnol.">
        <title>Complete genome sequence of the plant commensal Pseudomonas fluorescens Pf-5.</title>
        <authorList>
            <person name="Paulsen I.T."/>
            <person name="Press C.M."/>
            <person name="Ravel J."/>
            <person name="Kobayashi D.Y."/>
            <person name="Myers G.S.A."/>
            <person name="Mavrodi D.V."/>
            <person name="DeBoy R.T."/>
            <person name="Seshadri R."/>
            <person name="Ren Q."/>
            <person name="Madupu R."/>
            <person name="Dodson R.J."/>
            <person name="Durkin A.S."/>
            <person name="Brinkac L.M."/>
            <person name="Daugherty S.C."/>
            <person name="Sullivan S.A."/>
            <person name="Rosovitz M.J."/>
            <person name="Gwinn M.L."/>
            <person name="Zhou L."/>
            <person name="Schneider D.J."/>
            <person name="Cartinhour S.W."/>
            <person name="Nelson W.C."/>
            <person name="Weidman J."/>
            <person name="Watkins K."/>
            <person name="Tran K."/>
            <person name="Khouri H."/>
            <person name="Pierson E.A."/>
            <person name="Pierson L.S. III"/>
            <person name="Thomashow L.S."/>
            <person name="Loper J.E."/>
        </authorList>
    </citation>
    <scope>NUCLEOTIDE SEQUENCE [LARGE SCALE GENOMIC DNA]</scope>
    <source>
        <strain>ATCC BAA-477 / NRRL B-23932 / Pf-5</strain>
    </source>
</reference>
<comment type="similarity">
    <text evidence="1">Belongs to the UPF0235 family.</text>
</comment>
<feature type="chain" id="PRO_1000072670" description="UPF0235 protein PFL_5841">
    <location>
        <begin position="1"/>
        <end position="97"/>
    </location>
</feature>
<name>Y5841_PSEF5</name>
<sequence>MSYYRWDGDDLILDCHLQPKASSDEFAGLHGERLKIRLTAPPVEGKANAHLMAFLAKAFGIPKSNVSLVSGELNRQKRVRLQAPKKLPDLPGLARPA</sequence>
<dbReference type="EMBL" id="CP000076">
    <property type="protein sequence ID" value="AAY95031.1"/>
    <property type="molecule type" value="Genomic_DNA"/>
</dbReference>
<dbReference type="RefSeq" id="WP_011064015.1">
    <property type="nucleotide sequence ID" value="NC_004129.6"/>
</dbReference>
<dbReference type="SMR" id="Q4K4D4"/>
<dbReference type="STRING" id="220664.PFL_5841"/>
<dbReference type="KEGG" id="pfl:PFL_5841"/>
<dbReference type="PATRIC" id="fig|220664.5.peg.5955"/>
<dbReference type="eggNOG" id="COG1872">
    <property type="taxonomic scope" value="Bacteria"/>
</dbReference>
<dbReference type="HOGENOM" id="CLU_130694_5_0_6"/>
<dbReference type="Proteomes" id="UP000008540">
    <property type="component" value="Chromosome"/>
</dbReference>
<dbReference type="GO" id="GO:0005737">
    <property type="term" value="C:cytoplasm"/>
    <property type="evidence" value="ECO:0007669"/>
    <property type="project" value="TreeGrafter"/>
</dbReference>
<dbReference type="Gene3D" id="3.30.1200.10">
    <property type="entry name" value="YggU-like"/>
    <property type="match status" value="1"/>
</dbReference>
<dbReference type="HAMAP" id="MF_00634">
    <property type="entry name" value="UPF0235"/>
    <property type="match status" value="1"/>
</dbReference>
<dbReference type="InterPro" id="IPR003746">
    <property type="entry name" value="DUF167"/>
</dbReference>
<dbReference type="InterPro" id="IPR036591">
    <property type="entry name" value="YggU-like_sf"/>
</dbReference>
<dbReference type="NCBIfam" id="TIGR00251">
    <property type="entry name" value="DUF167 family protein"/>
    <property type="match status" value="1"/>
</dbReference>
<dbReference type="PANTHER" id="PTHR13420">
    <property type="entry name" value="UPF0235 PROTEIN C15ORF40"/>
    <property type="match status" value="1"/>
</dbReference>
<dbReference type="PANTHER" id="PTHR13420:SF7">
    <property type="entry name" value="UPF0235 PROTEIN C15ORF40"/>
    <property type="match status" value="1"/>
</dbReference>
<dbReference type="Pfam" id="PF02594">
    <property type="entry name" value="DUF167"/>
    <property type="match status" value="1"/>
</dbReference>
<dbReference type="SMART" id="SM01152">
    <property type="entry name" value="DUF167"/>
    <property type="match status" value="1"/>
</dbReference>
<dbReference type="SUPFAM" id="SSF69786">
    <property type="entry name" value="YggU-like"/>
    <property type="match status" value="1"/>
</dbReference>
<accession>Q4K4D4</accession>
<organism>
    <name type="scientific">Pseudomonas fluorescens (strain ATCC BAA-477 / NRRL B-23932 / Pf-5)</name>
    <dbReference type="NCBI Taxonomy" id="220664"/>
    <lineage>
        <taxon>Bacteria</taxon>
        <taxon>Pseudomonadati</taxon>
        <taxon>Pseudomonadota</taxon>
        <taxon>Gammaproteobacteria</taxon>
        <taxon>Pseudomonadales</taxon>
        <taxon>Pseudomonadaceae</taxon>
        <taxon>Pseudomonas</taxon>
    </lineage>
</organism>